<accession>P94408</accession>
<organism>
    <name type="scientific">Bacillus subtilis (strain 168)</name>
    <dbReference type="NCBI Taxonomy" id="224308"/>
    <lineage>
        <taxon>Bacteria</taxon>
        <taxon>Bacillati</taxon>
        <taxon>Bacillota</taxon>
        <taxon>Bacilli</taxon>
        <taxon>Bacillales</taxon>
        <taxon>Bacillaceae</taxon>
        <taxon>Bacillus</taxon>
    </lineage>
</organism>
<reference key="1">
    <citation type="journal article" date="1996" name="Microbiology">
        <title>The 25 degrees-36 degrees region of the Bacillus subtilis chromosome: determination of the sequence of a 146 kb segment and identification of 113 genes.</title>
        <authorList>
            <person name="Yamane K."/>
            <person name="Kumano M."/>
            <person name="Kurita K."/>
        </authorList>
    </citation>
    <scope>NUCLEOTIDE SEQUENCE [GENOMIC DNA]</scope>
    <source>
        <strain>168</strain>
    </source>
</reference>
<reference key="2">
    <citation type="journal article" date="1997" name="Nature">
        <title>The complete genome sequence of the Gram-positive bacterium Bacillus subtilis.</title>
        <authorList>
            <person name="Kunst F."/>
            <person name="Ogasawara N."/>
            <person name="Moszer I."/>
            <person name="Albertini A.M."/>
            <person name="Alloni G."/>
            <person name="Azevedo V."/>
            <person name="Bertero M.G."/>
            <person name="Bessieres P."/>
            <person name="Bolotin A."/>
            <person name="Borchert S."/>
            <person name="Borriss R."/>
            <person name="Boursier L."/>
            <person name="Brans A."/>
            <person name="Braun M."/>
            <person name="Brignell S.C."/>
            <person name="Bron S."/>
            <person name="Brouillet S."/>
            <person name="Bruschi C.V."/>
            <person name="Caldwell B."/>
            <person name="Capuano V."/>
            <person name="Carter N.M."/>
            <person name="Choi S.-K."/>
            <person name="Codani J.-J."/>
            <person name="Connerton I.F."/>
            <person name="Cummings N.J."/>
            <person name="Daniel R.A."/>
            <person name="Denizot F."/>
            <person name="Devine K.M."/>
            <person name="Duesterhoeft A."/>
            <person name="Ehrlich S.D."/>
            <person name="Emmerson P.T."/>
            <person name="Entian K.-D."/>
            <person name="Errington J."/>
            <person name="Fabret C."/>
            <person name="Ferrari E."/>
            <person name="Foulger D."/>
            <person name="Fritz C."/>
            <person name="Fujita M."/>
            <person name="Fujita Y."/>
            <person name="Fuma S."/>
            <person name="Galizzi A."/>
            <person name="Galleron N."/>
            <person name="Ghim S.-Y."/>
            <person name="Glaser P."/>
            <person name="Goffeau A."/>
            <person name="Golightly E.J."/>
            <person name="Grandi G."/>
            <person name="Guiseppi G."/>
            <person name="Guy B.J."/>
            <person name="Haga K."/>
            <person name="Haiech J."/>
            <person name="Harwood C.R."/>
            <person name="Henaut A."/>
            <person name="Hilbert H."/>
            <person name="Holsappel S."/>
            <person name="Hosono S."/>
            <person name="Hullo M.-F."/>
            <person name="Itaya M."/>
            <person name="Jones L.-M."/>
            <person name="Joris B."/>
            <person name="Karamata D."/>
            <person name="Kasahara Y."/>
            <person name="Klaerr-Blanchard M."/>
            <person name="Klein C."/>
            <person name="Kobayashi Y."/>
            <person name="Koetter P."/>
            <person name="Koningstein G."/>
            <person name="Krogh S."/>
            <person name="Kumano M."/>
            <person name="Kurita K."/>
            <person name="Lapidus A."/>
            <person name="Lardinois S."/>
            <person name="Lauber J."/>
            <person name="Lazarevic V."/>
            <person name="Lee S.-M."/>
            <person name="Levine A."/>
            <person name="Liu H."/>
            <person name="Masuda S."/>
            <person name="Mauel C."/>
            <person name="Medigue C."/>
            <person name="Medina N."/>
            <person name="Mellado R.P."/>
            <person name="Mizuno M."/>
            <person name="Moestl D."/>
            <person name="Nakai S."/>
            <person name="Noback M."/>
            <person name="Noone D."/>
            <person name="O'Reilly M."/>
            <person name="Ogawa K."/>
            <person name="Ogiwara A."/>
            <person name="Oudega B."/>
            <person name="Park S.-H."/>
            <person name="Parro V."/>
            <person name="Pohl T.M."/>
            <person name="Portetelle D."/>
            <person name="Porwollik S."/>
            <person name="Prescott A.M."/>
            <person name="Presecan E."/>
            <person name="Pujic P."/>
            <person name="Purnelle B."/>
            <person name="Rapoport G."/>
            <person name="Rey M."/>
            <person name="Reynolds S."/>
            <person name="Rieger M."/>
            <person name="Rivolta C."/>
            <person name="Rocha E."/>
            <person name="Roche B."/>
            <person name="Rose M."/>
            <person name="Sadaie Y."/>
            <person name="Sato T."/>
            <person name="Scanlan E."/>
            <person name="Schleich S."/>
            <person name="Schroeter R."/>
            <person name="Scoffone F."/>
            <person name="Sekiguchi J."/>
            <person name="Sekowska A."/>
            <person name="Seror S.J."/>
            <person name="Serror P."/>
            <person name="Shin B.-S."/>
            <person name="Soldo B."/>
            <person name="Sorokin A."/>
            <person name="Tacconi E."/>
            <person name="Takagi T."/>
            <person name="Takahashi H."/>
            <person name="Takemaru K."/>
            <person name="Takeuchi M."/>
            <person name="Tamakoshi A."/>
            <person name="Tanaka T."/>
            <person name="Terpstra P."/>
            <person name="Tognoni A."/>
            <person name="Tosato V."/>
            <person name="Uchiyama S."/>
            <person name="Vandenbol M."/>
            <person name="Vannier F."/>
            <person name="Vassarotti A."/>
            <person name="Viari A."/>
            <person name="Wambutt R."/>
            <person name="Wedler E."/>
            <person name="Wedler H."/>
            <person name="Weitzenegger T."/>
            <person name="Winters P."/>
            <person name="Wipat A."/>
            <person name="Yamamoto H."/>
            <person name="Yamane K."/>
            <person name="Yasumoto K."/>
            <person name="Yata K."/>
            <person name="Yoshida K."/>
            <person name="Yoshikawa H.-F."/>
            <person name="Zumstein E."/>
            <person name="Yoshikawa H."/>
            <person name="Danchin A."/>
        </authorList>
    </citation>
    <scope>NUCLEOTIDE SEQUENCE [LARGE SCALE GENOMIC DNA]</scope>
    <source>
        <strain>168</strain>
    </source>
</reference>
<reference key="3">
    <citation type="journal article" date="2009" name="Microbiology">
        <title>From a consortium sequence to a unified sequence: the Bacillus subtilis 168 reference genome a decade later.</title>
        <authorList>
            <person name="Barbe V."/>
            <person name="Cruveiller S."/>
            <person name="Kunst F."/>
            <person name="Lenoble P."/>
            <person name="Meurice G."/>
            <person name="Sekowska A."/>
            <person name="Vallenet D."/>
            <person name="Wang T."/>
            <person name="Moszer I."/>
            <person name="Medigue C."/>
            <person name="Danchin A."/>
        </authorList>
    </citation>
    <scope>SEQUENCE REVISION TO 204</scope>
</reference>
<comment type="subcellular location">
    <subcellularLocation>
        <location evidence="2">Cell membrane</location>
        <topology evidence="2">Multi-pass membrane protein</topology>
    </subcellularLocation>
</comment>
<comment type="similarity">
    <text evidence="2">Belongs to the major facilitator superfamily. Proton-dependent oligopeptide transporter (POT/PTR) (TC 2.A.17) family.</text>
</comment>
<name>YCLF_BACSU</name>
<proteinExistence type="inferred from homology"/>
<keyword id="KW-1003">Cell membrane</keyword>
<keyword id="KW-0472">Membrane</keyword>
<keyword id="KW-1185">Reference proteome</keyword>
<keyword id="KW-0812">Transmembrane</keyword>
<keyword id="KW-1133">Transmembrane helix</keyword>
<keyword id="KW-0813">Transport</keyword>
<sequence>MASIDNESIIKSVPQKGFFGHPRGLFTLFFTEFWERFSYYGMRAILLYYLYTETVNGGLGFDKGTAVAIMSIYGSLVYMSTIIGGWLADRVFGTANTVFYGGIFIMFGHIALAYPGSSIAFYISMVLIIVGTGLLKPNVSSVVGDLYTKEDPRRDSGFSIFYMGINLGGLLAPLIVGTLGQKYNYHLGFGAAAVGMLLGLIVFALTRKKNLGLAGSNVPNPLSKKSAIGTGIGVIIVAIAVIISVQTGVLTIKRFIDLVSILGILIPVIYFIIMFTSKKADKTEKSRLAAYVPLFIGAVMFWAIQEQGATILAVYADERIRLSLGGFELQSSWFQSLNPLFVVIFAPIFAWLWMKLGKRQPSTPVKFSIGIILAGLSFIIMVFPAMQGKEALVSPLWLVLSFLLVVLGELCLSPVGLSVTTKLAPAAFSAQTMSMWFLTNAAAQAINAQVAGLFDKIPETMYFGTIGLISIVLGGILLLLSPVIKRAMKGVL</sequence>
<gene>
    <name type="primary">yclF</name>
    <name type="ordered locus">BSU03670</name>
</gene>
<evidence type="ECO:0000255" key="1"/>
<evidence type="ECO:0000305" key="2"/>
<dbReference type="EMBL" id="D50453">
    <property type="protein sequence ID" value="BAA09000.1"/>
    <property type="molecule type" value="Genomic_DNA"/>
</dbReference>
<dbReference type="EMBL" id="AL009126">
    <property type="protein sequence ID" value="CAB12175.2"/>
    <property type="molecule type" value="Genomic_DNA"/>
</dbReference>
<dbReference type="PIR" id="C69762">
    <property type="entry name" value="C69762"/>
</dbReference>
<dbReference type="RefSeq" id="WP_003246610.1">
    <property type="nucleotide sequence ID" value="NZ_OZ025638.1"/>
</dbReference>
<dbReference type="SMR" id="P94408"/>
<dbReference type="FunCoup" id="P94408">
    <property type="interactions" value="105"/>
</dbReference>
<dbReference type="STRING" id="224308.BSU03670"/>
<dbReference type="PaxDb" id="224308-BSU03670"/>
<dbReference type="EnsemblBacteria" id="CAB12175">
    <property type="protein sequence ID" value="CAB12175"/>
    <property type="gene ID" value="BSU_03670"/>
</dbReference>
<dbReference type="GeneID" id="938295"/>
<dbReference type="KEGG" id="bsu:BSU03670"/>
<dbReference type="PATRIC" id="fig|224308.179.peg.387"/>
<dbReference type="eggNOG" id="COG3104">
    <property type="taxonomic scope" value="Bacteria"/>
</dbReference>
<dbReference type="InParanoid" id="P94408"/>
<dbReference type="OrthoDB" id="9772725at2"/>
<dbReference type="PhylomeDB" id="P94408"/>
<dbReference type="BioCyc" id="BSUB:BSU03670-MONOMER"/>
<dbReference type="Proteomes" id="UP000001570">
    <property type="component" value="Chromosome"/>
</dbReference>
<dbReference type="GO" id="GO:0005886">
    <property type="term" value="C:plasma membrane"/>
    <property type="evidence" value="ECO:0000318"/>
    <property type="project" value="GO_Central"/>
</dbReference>
<dbReference type="GO" id="GO:1904680">
    <property type="term" value="F:peptide transmembrane transporter activity"/>
    <property type="evidence" value="ECO:0007669"/>
    <property type="project" value="InterPro"/>
</dbReference>
<dbReference type="GO" id="GO:0022857">
    <property type="term" value="F:transmembrane transporter activity"/>
    <property type="evidence" value="ECO:0000318"/>
    <property type="project" value="GO_Central"/>
</dbReference>
<dbReference type="GO" id="GO:0006857">
    <property type="term" value="P:oligopeptide transport"/>
    <property type="evidence" value="ECO:0007669"/>
    <property type="project" value="InterPro"/>
</dbReference>
<dbReference type="GO" id="GO:0055085">
    <property type="term" value="P:transmembrane transport"/>
    <property type="evidence" value="ECO:0000318"/>
    <property type="project" value="GO_Central"/>
</dbReference>
<dbReference type="CDD" id="cd17346">
    <property type="entry name" value="MFS_DtpA_like"/>
    <property type="match status" value="1"/>
</dbReference>
<dbReference type="FunFam" id="1.20.1250.20:FF:000017">
    <property type="entry name" value="Dipeptide and tripeptide permease A"/>
    <property type="match status" value="1"/>
</dbReference>
<dbReference type="Gene3D" id="1.20.1250.20">
    <property type="entry name" value="MFS general substrate transporter like domains"/>
    <property type="match status" value="1"/>
</dbReference>
<dbReference type="InterPro" id="IPR005279">
    <property type="entry name" value="Dipep/tripep_permease"/>
</dbReference>
<dbReference type="InterPro" id="IPR020846">
    <property type="entry name" value="MFS_dom"/>
</dbReference>
<dbReference type="InterPro" id="IPR036259">
    <property type="entry name" value="MFS_trans_sf"/>
</dbReference>
<dbReference type="InterPro" id="IPR050171">
    <property type="entry name" value="MFS_Transporters"/>
</dbReference>
<dbReference type="InterPro" id="IPR000109">
    <property type="entry name" value="POT_fam"/>
</dbReference>
<dbReference type="InterPro" id="IPR018456">
    <property type="entry name" value="PTR2_symporter_CS"/>
</dbReference>
<dbReference type="NCBIfam" id="TIGR00924">
    <property type="entry name" value="yjdL_sub1_fam"/>
    <property type="match status" value="1"/>
</dbReference>
<dbReference type="PANTHER" id="PTHR23517:SF15">
    <property type="entry name" value="PROTON-DEPENDENT OLIGOPEPTIDE FAMILY TRANSPORT PROTEIN"/>
    <property type="match status" value="1"/>
</dbReference>
<dbReference type="PANTHER" id="PTHR23517">
    <property type="entry name" value="RESISTANCE PROTEIN MDTM, PUTATIVE-RELATED-RELATED"/>
    <property type="match status" value="1"/>
</dbReference>
<dbReference type="Pfam" id="PF00854">
    <property type="entry name" value="PTR2"/>
    <property type="match status" value="1"/>
</dbReference>
<dbReference type="SUPFAM" id="SSF103473">
    <property type="entry name" value="MFS general substrate transporter"/>
    <property type="match status" value="1"/>
</dbReference>
<dbReference type="PROSITE" id="PS50850">
    <property type="entry name" value="MFS"/>
    <property type="match status" value="1"/>
</dbReference>
<dbReference type="PROSITE" id="PS01022">
    <property type="entry name" value="PTR2_1"/>
    <property type="match status" value="1"/>
</dbReference>
<dbReference type="PROSITE" id="PS01023">
    <property type="entry name" value="PTR2_2"/>
    <property type="match status" value="1"/>
</dbReference>
<feature type="chain" id="PRO_0000064331" description="Uncharacterized transporter YclF">
    <location>
        <begin position="1"/>
        <end position="492"/>
    </location>
</feature>
<feature type="transmembrane region" description="Helical" evidence="1">
    <location>
        <begin position="67"/>
        <end position="87"/>
    </location>
</feature>
<feature type="transmembrane region" description="Helical" evidence="1">
    <location>
        <begin position="88"/>
        <end position="108"/>
    </location>
</feature>
<feature type="transmembrane region" description="Helical" evidence="1">
    <location>
        <begin position="110"/>
        <end position="130"/>
    </location>
</feature>
<feature type="transmembrane region" description="Helical" evidence="1">
    <location>
        <begin position="157"/>
        <end position="177"/>
    </location>
</feature>
<feature type="transmembrane region" description="Helical" evidence="1">
    <location>
        <begin position="185"/>
        <end position="205"/>
    </location>
</feature>
<feature type="transmembrane region" description="Helical" evidence="1">
    <location>
        <begin position="232"/>
        <end position="252"/>
    </location>
</feature>
<feature type="transmembrane region" description="Helical" evidence="1">
    <location>
        <begin position="255"/>
        <end position="275"/>
    </location>
</feature>
<feature type="transmembrane region" description="Helical" evidence="1">
    <location>
        <begin position="294"/>
        <end position="314"/>
    </location>
</feature>
<feature type="transmembrane region" description="Helical" evidence="1">
    <location>
        <begin position="333"/>
        <end position="353"/>
    </location>
</feature>
<feature type="transmembrane region" description="Helical" evidence="1">
    <location>
        <begin position="367"/>
        <end position="387"/>
    </location>
</feature>
<feature type="transmembrane region" description="Helical" evidence="1">
    <location>
        <begin position="392"/>
        <end position="412"/>
    </location>
</feature>
<feature type="transmembrane region" description="Helical" evidence="1">
    <location>
        <begin position="434"/>
        <end position="454"/>
    </location>
</feature>
<feature type="transmembrane region" description="Helical" evidence="1">
    <location>
        <begin position="464"/>
        <end position="484"/>
    </location>
</feature>
<feature type="sequence conflict" description="In Ref. 1; BAA09000." evidence="2" ref="1">
    <original>A</original>
    <variation>P</variation>
    <location>
        <position position="204"/>
    </location>
</feature>
<protein>
    <recommendedName>
        <fullName>Uncharacterized transporter YclF</fullName>
    </recommendedName>
</protein>